<comment type="function">
    <text evidence="1">Endonuclease that specifically degrades the RNA of RNA-DNA hybrids.</text>
</comment>
<comment type="catalytic activity">
    <reaction evidence="1">
        <text>Endonucleolytic cleavage to 5'-phosphomonoester.</text>
        <dbReference type="EC" id="3.1.26.4"/>
    </reaction>
</comment>
<comment type="cofactor">
    <cofactor evidence="1">
        <name>Mn(2+)</name>
        <dbReference type="ChEBI" id="CHEBI:29035"/>
    </cofactor>
    <cofactor evidence="1">
        <name>Mg(2+)</name>
        <dbReference type="ChEBI" id="CHEBI:18420"/>
    </cofactor>
    <text evidence="1">Manganese or magnesium. Binds 1 divalent metal ion per monomer in the absence of substrate. May bind a second metal ion after substrate binding.</text>
</comment>
<comment type="subcellular location">
    <subcellularLocation>
        <location evidence="1">Cytoplasm</location>
    </subcellularLocation>
</comment>
<comment type="similarity">
    <text evidence="1">Belongs to the RNase HII family.</text>
</comment>
<comment type="sequence caution" evidence="3">
    <conflict type="erroneous initiation">
        <sequence resource="EMBL-CDS" id="ABG62103"/>
    </conflict>
</comment>
<evidence type="ECO:0000255" key="1">
    <source>
        <dbReference type="HAMAP-Rule" id="MF_00052"/>
    </source>
</evidence>
<evidence type="ECO:0000255" key="2">
    <source>
        <dbReference type="PROSITE-ProRule" id="PRU01319"/>
    </source>
</evidence>
<evidence type="ECO:0000305" key="3"/>
<gene>
    <name evidence="1" type="primary">rnhB</name>
    <name type="ordered locus">Meso_0703</name>
</gene>
<keyword id="KW-0963">Cytoplasm</keyword>
<keyword id="KW-0255">Endonuclease</keyword>
<keyword id="KW-0378">Hydrolase</keyword>
<keyword id="KW-0464">Manganese</keyword>
<keyword id="KW-0479">Metal-binding</keyword>
<keyword id="KW-0540">Nuclease</keyword>
<reference key="1">
    <citation type="submission" date="2006-06" db="EMBL/GenBank/DDBJ databases">
        <title>Complete sequence of chromosome of Mesorhizobium sp. BNC1.</title>
        <authorList>
            <consortium name="US DOE Joint Genome Institute"/>
            <person name="Copeland A."/>
            <person name="Lucas S."/>
            <person name="Lapidus A."/>
            <person name="Barry K."/>
            <person name="Detter J.C."/>
            <person name="Glavina del Rio T."/>
            <person name="Hammon N."/>
            <person name="Israni S."/>
            <person name="Dalin E."/>
            <person name="Tice H."/>
            <person name="Pitluck S."/>
            <person name="Chertkov O."/>
            <person name="Brettin T."/>
            <person name="Bruce D."/>
            <person name="Han C."/>
            <person name="Tapia R."/>
            <person name="Gilna P."/>
            <person name="Schmutz J."/>
            <person name="Larimer F."/>
            <person name="Land M."/>
            <person name="Hauser L."/>
            <person name="Kyrpides N."/>
            <person name="Mikhailova N."/>
            <person name="Richardson P."/>
        </authorList>
    </citation>
    <scope>NUCLEOTIDE SEQUENCE [LARGE SCALE GENOMIC DNA]</scope>
    <source>
        <strain>BNC1</strain>
    </source>
</reference>
<proteinExistence type="inferred from homology"/>
<dbReference type="EC" id="3.1.26.4" evidence="1"/>
<dbReference type="EMBL" id="CP000390">
    <property type="protein sequence ID" value="ABG62103.1"/>
    <property type="status" value="ALT_INIT"/>
    <property type="molecule type" value="Genomic_DNA"/>
</dbReference>
<dbReference type="SMR" id="Q11KH2"/>
<dbReference type="STRING" id="266779.Meso_0703"/>
<dbReference type="KEGG" id="mes:Meso_0703"/>
<dbReference type="eggNOG" id="COG0164">
    <property type="taxonomic scope" value="Bacteria"/>
</dbReference>
<dbReference type="HOGENOM" id="CLU_036532_3_2_5"/>
<dbReference type="OrthoDB" id="9803420at2"/>
<dbReference type="GO" id="GO:0005737">
    <property type="term" value="C:cytoplasm"/>
    <property type="evidence" value="ECO:0007669"/>
    <property type="project" value="UniProtKB-SubCell"/>
</dbReference>
<dbReference type="GO" id="GO:0032299">
    <property type="term" value="C:ribonuclease H2 complex"/>
    <property type="evidence" value="ECO:0007669"/>
    <property type="project" value="TreeGrafter"/>
</dbReference>
<dbReference type="GO" id="GO:0030145">
    <property type="term" value="F:manganese ion binding"/>
    <property type="evidence" value="ECO:0007669"/>
    <property type="project" value="UniProtKB-UniRule"/>
</dbReference>
<dbReference type="GO" id="GO:0003723">
    <property type="term" value="F:RNA binding"/>
    <property type="evidence" value="ECO:0007669"/>
    <property type="project" value="InterPro"/>
</dbReference>
<dbReference type="GO" id="GO:0004523">
    <property type="term" value="F:RNA-DNA hybrid ribonuclease activity"/>
    <property type="evidence" value="ECO:0007669"/>
    <property type="project" value="UniProtKB-UniRule"/>
</dbReference>
<dbReference type="GO" id="GO:0043137">
    <property type="term" value="P:DNA replication, removal of RNA primer"/>
    <property type="evidence" value="ECO:0007669"/>
    <property type="project" value="TreeGrafter"/>
</dbReference>
<dbReference type="GO" id="GO:0006298">
    <property type="term" value="P:mismatch repair"/>
    <property type="evidence" value="ECO:0007669"/>
    <property type="project" value="TreeGrafter"/>
</dbReference>
<dbReference type="CDD" id="cd07182">
    <property type="entry name" value="RNase_HII_bacteria_HII_like"/>
    <property type="match status" value="1"/>
</dbReference>
<dbReference type="Gene3D" id="3.30.420.10">
    <property type="entry name" value="Ribonuclease H-like superfamily/Ribonuclease H"/>
    <property type="match status" value="1"/>
</dbReference>
<dbReference type="HAMAP" id="MF_00052_B">
    <property type="entry name" value="RNase_HII_B"/>
    <property type="match status" value="1"/>
</dbReference>
<dbReference type="InterPro" id="IPR022898">
    <property type="entry name" value="RNase_HII"/>
</dbReference>
<dbReference type="InterPro" id="IPR001352">
    <property type="entry name" value="RNase_HII/HIII"/>
</dbReference>
<dbReference type="InterPro" id="IPR024567">
    <property type="entry name" value="RNase_HII/HIII_dom"/>
</dbReference>
<dbReference type="InterPro" id="IPR012337">
    <property type="entry name" value="RNaseH-like_sf"/>
</dbReference>
<dbReference type="InterPro" id="IPR036397">
    <property type="entry name" value="RNaseH_sf"/>
</dbReference>
<dbReference type="NCBIfam" id="NF000595">
    <property type="entry name" value="PRK00015.1-3"/>
    <property type="match status" value="1"/>
</dbReference>
<dbReference type="PANTHER" id="PTHR10954">
    <property type="entry name" value="RIBONUCLEASE H2 SUBUNIT A"/>
    <property type="match status" value="1"/>
</dbReference>
<dbReference type="PANTHER" id="PTHR10954:SF18">
    <property type="entry name" value="RIBONUCLEASE HII"/>
    <property type="match status" value="1"/>
</dbReference>
<dbReference type="Pfam" id="PF01351">
    <property type="entry name" value="RNase_HII"/>
    <property type="match status" value="1"/>
</dbReference>
<dbReference type="SUPFAM" id="SSF53098">
    <property type="entry name" value="Ribonuclease H-like"/>
    <property type="match status" value="1"/>
</dbReference>
<dbReference type="PROSITE" id="PS51975">
    <property type="entry name" value="RNASE_H_2"/>
    <property type="match status" value="1"/>
</dbReference>
<protein>
    <recommendedName>
        <fullName evidence="1">Ribonuclease HII</fullName>
        <shortName evidence="1">RNase HII</shortName>
        <ecNumber evidence="1">3.1.26.4</ecNumber>
    </recommendedName>
</protein>
<name>RNH2_CHESB</name>
<sequence length="253" mass="27006">MASSQSDSPPLFDLPVRPDFTIEWKIMREGLAPVAGLDEAGRGPLAGPVVAAAVVLDPDRIPEGLDDSKRLTAEARERLVQEIFEVAAAVSVASLCAASIDESNILKASLEAMRRALDGLCVRPAYALADGRDIPPGLPCPCRAVVKGDQRSQSIAAASMVAKVVRDRMMVRTGTLMPHYGFHSHVGYATERHREAITAYGPVTRLHRMSFSPFKTSGEEDRILASGDAAELIASAFSAADGLNGRDAEKEPV</sequence>
<accession>Q11KH2</accession>
<organism>
    <name type="scientific">Chelativorans sp. (strain BNC1)</name>
    <dbReference type="NCBI Taxonomy" id="266779"/>
    <lineage>
        <taxon>Bacteria</taxon>
        <taxon>Pseudomonadati</taxon>
        <taxon>Pseudomonadota</taxon>
        <taxon>Alphaproteobacteria</taxon>
        <taxon>Hyphomicrobiales</taxon>
        <taxon>Phyllobacteriaceae</taxon>
        <taxon>Chelativorans</taxon>
    </lineage>
</organism>
<feature type="chain" id="PRO_0000334919" description="Ribonuclease HII">
    <location>
        <begin position="1"/>
        <end position="253"/>
    </location>
</feature>
<feature type="domain" description="RNase H type-2" evidence="2">
    <location>
        <begin position="32"/>
        <end position="223"/>
    </location>
</feature>
<feature type="binding site" evidence="1">
    <location>
        <position position="38"/>
    </location>
    <ligand>
        <name>a divalent metal cation</name>
        <dbReference type="ChEBI" id="CHEBI:60240"/>
    </ligand>
</feature>
<feature type="binding site" evidence="1">
    <location>
        <position position="39"/>
    </location>
    <ligand>
        <name>a divalent metal cation</name>
        <dbReference type="ChEBI" id="CHEBI:60240"/>
    </ligand>
</feature>
<feature type="binding site" evidence="1">
    <location>
        <position position="130"/>
    </location>
    <ligand>
        <name>a divalent metal cation</name>
        <dbReference type="ChEBI" id="CHEBI:60240"/>
    </ligand>
</feature>